<accession>A9WW43</accession>
<feature type="chain" id="PRO_1000077083" description="tRNA pseudouridine synthase A">
    <location>
        <begin position="1"/>
        <end position="251"/>
    </location>
</feature>
<feature type="active site" description="Nucleophile" evidence="1">
    <location>
        <position position="52"/>
    </location>
</feature>
<feature type="binding site" evidence="1">
    <location>
        <position position="113"/>
    </location>
    <ligand>
        <name>substrate</name>
    </ligand>
</feature>
<keyword id="KW-0413">Isomerase</keyword>
<keyword id="KW-0819">tRNA processing</keyword>
<comment type="function">
    <text evidence="1">Formation of pseudouridine at positions 38, 39 and 40 in the anticodon stem and loop of transfer RNAs.</text>
</comment>
<comment type="catalytic activity">
    <reaction evidence="1">
        <text>uridine(38/39/40) in tRNA = pseudouridine(38/39/40) in tRNA</text>
        <dbReference type="Rhea" id="RHEA:22376"/>
        <dbReference type="Rhea" id="RHEA-COMP:10085"/>
        <dbReference type="Rhea" id="RHEA-COMP:10087"/>
        <dbReference type="ChEBI" id="CHEBI:65314"/>
        <dbReference type="ChEBI" id="CHEBI:65315"/>
        <dbReference type="EC" id="5.4.99.12"/>
    </reaction>
</comment>
<comment type="subunit">
    <text evidence="1">Homodimer.</text>
</comment>
<comment type="similarity">
    <text evidence="1">Belongs to the tRNA pseudouridine synthase TruA family.</text>
</comment>
<name>TRUA_BRUSI</name>
<evidence type="ECO:0000255" key="1">
    <source>
        <dbReference type="HAMAP-Rule" id="MF_00171"/>
    </source>
</evidence>
<organism>
    <name type="scientific">Brucella suis (strain ATCC 23445 / NCTC 10510)</name>
    <dbReference type="NCBI Taxonomy" id="470137"/>
    <lineage>
        <taxon>Bacteria</taxon>
        <taxon>Pseudomonadati</taxon>
        <taxon>Pseudomonadota</taxon>
        <taxon>Alphaproteobacteria</taxon>
        <taxon>Hyphomicrobiales</taxon>
        <taxon>Brucellaceae</taxon>
        <taxon>Brucella/Ochrobactrum group</taxon>
        <taxon>Brucella</taxon>
    </lineage>
</organism>
<dbReference type="EC" id="5.4.99.12" evidence="1"/>
<dbReference type="EMBL" id="CP000912">
    <property type="protein sequence ID" value="ABY39979.1"/>
    <property type="molecule type" value="Genomic_DNA"/>
</dbReference>
<dbReference type="RefSeq" id="WP_002965618.1">
    <property type="nucleotide sequence ID" value="NC_010167.1"/>
</dbReference>
<dbReference type="SMR" id="A9WW43"/>
<dbReference type="GeneID" id="97534918"/>
<dbReference type="KEGG" id="bmt:BSUIS_B1028"/>
<dbReference type="HOGENOM" id="CLU_014673_0_2_5"/>
<dbReference type="Proteomes" id="UP000008545">
    <property type="component" value="Chromosome II"/>
</dbReference>
<dbReference type="GO" id="GO:0003723">
    <property type="term" value="F:RNA binding"/>
    <property type="evidence" value="ECO:0007669"/>
    <property type="project" value="InterPro"/>
</dbReference>
<dbReference type="GO" id="GO:0160147">
    <property type="term" value="F:tRNA pseudouridine(38-40) synthase activity"/>
    <property type="evidence" value="ECO:0007669"/>
    <property type="project" value="UniProtKB-EC"/>
</dbReference>
<dbReference type="GO" id="GO:0031119">
    <property type="term" value="P:tRNA pseudouridine synthesis"/>
    <property type="evidence" value="ECO:0007669"/>
    <property type="project" value="UniProtKB-UniRule"/>
</dbReference>
<dbReference type="CDD" id="cd02570">
    <property type="entry name" value="PseudoU_synth_EcTruA"/>
    <property type="match status" value="1"/>
</dbReference>
<dbReference type="FunFam" id="3.30.70.580:FF:000001">
    <property type="entry name" value="tRNA pseudouridine synthase A"/>
    <property type="match status" value="1"/>
</dbReference>
<dbReference type="Gene3D" id="3.30.70.660">
    <property type="entry name" value="Pseudouridine synthase I, catalytic domain, C-terminal subdomain"/>
    <property type="match status" value="1"/>
</dbReference>
<dbReference type="Gene3D" id="3.30.70.580">
    <property type="entry name" value="Pseudouridine synthase I, catalytic domain, N-terminal subdomain"/>
    <property type="match status" value="1"/>
</dbReference>
<dbReference type="HAMAP" id="MF_00171">
    <property type="entry name" value="TruA"/>
    <property type="match status" value="1"/>
</dbReference>
<dbReference type="InterPro" id="IPR020103">
    <property type="entry name" value="PsdUridine_synth_cat_dom_sf"/>
</dbReference>
<dbReference type="InterPro" id="IPR001406">
    <property type="entry name" value="PsdUridine_synth_TruA"/>
</dbReference>
<dbReference type="InterPro" id="IPR020097">
    <property type="entry name" value="PsdUridine_synth_TruA_a/b_dom"/>
</dbReference>
<dbReference type="InterPro" id="IPR020095">
    <property type="entry name" value="PsdUridine_synth_TruA_C"/>
</dbReference>
<dbReference type="InterPro" id="IPR020094">
    <property type="entry name" value="TruA/RsuA/RluB/E/F_N"/>
</dbReference>
<dbReference type="NCBIfam" id="TIGR00071">
    <property type="entry name" value="hisT_truA"/>
    <property type="match status" value="1"/>
</dbReference>
<dbReference type="PANTHER" id="PTHR11142">
    <property type="entry name" value="PSEUDOURIDYLATE SYNTHASE"/>
    <property type="match status" value="1"/>
</dbReference>
<dbReference type="PANTHER" id="PTHR11142:SF0">
    <property type="entry name" value="TRNA PSEUDOURIDINE SYNTHASE-LIKE 1"/>
    <property type="match status" value="1"/>
</dbReference>
<dbReference type="Pfam" id="PF01416">
    <property type="entry name" value="PseudoU_synth_1"/>
    <property type="match status" value="2"/>
</dbReference>
<dbReference type="PIRSF" id="PIRSF001430">
    <property type="entry name" value="tRNA_psdUrid_synth"/>
    <property type="match status" value="1"/>
</dbReference>
<dbReference type="SUPFAM" id="SSF55120">
    <property type="entry name" value="Pseudouridine synthase"/>
    <property type="match status" value="1"/>
</dbReference>
<protein>
    <recommendedName>
        <fullName evidence="1">tRNA pseudouridine synthase A</fullName>
        <ecNumber evidence="1">5.4.99.12</ecNumber>
    </recommendedName>
    <alternativeName>
        <fullName evidence="1">tRNA pseudouridine(38-40) synthase</fullName>
    </alternativeName>
    <alternativeName>
        <fullName evidence="1">tRNA pseudouridylate synthase I</fullName>
    </alternativeName>
    <alternativeName>
        <fullName evidence="1">tRNA-uridine isomerase I</fullName>
    </alternativeName>
</protein>
<sequence>MPRYKLTVEYDGTPYVGWQRQENGHAVQGAIEQAFKKFCGEDLTLSAAGRTDAGVHATAQVAHVDLAKDWGAGKVRDAVNAHLVMADERISILNVEKTTDTFDARFSARARHYLYRIHNRRAPLAVDYQRAWWVQKQLDADAMHEAAQRLLGEHDFTTFRATQCQAKSPVKTLDRLDVTRNGDMVEMRVSARSFLHNQVRSFAGSLMEVGVGRWTADDLQAALEARDRKACGQVAPPYGLYLVGVDYAFPF</sequence>
<proteinExistence type="inferred from homology"/>
<reference key="1">
    <citation type="submission" date="2007-12" db="EMBL/GenBank/DDBJ databases">
        <title>Brucella suis ATCC 23445 whole genome shotgun sequencing project.</title>
        <authorList>
            <person name="Setubal J.C."/>
            <person name="Bowns C."/>
            <person name="Boyle S."/>
            <person name="Crasta O.R."/>
            <person name="Czar M.J."/>
            <person name="Dharmanolla C."/>
            <person name="Gillespie J.J."/>
            <person name="Kenyon R.W."/>
            <person name="Lu J."/>
            <person name="Mane S."/>
            <person name="Mohapatra S."/>
            <person name="Nagrani S."/>
            <person name="Purkayastha A."/>
            <person name="Rajasimha H.K."/>
            <person name="Shallom J.M."/>
            <person name="Shallom S."/>
            <person name="Shukla M."/>
            <person name="Snyder E.E."/>
            <person name="Sobral B.W."/>
            <person name="Wattam A.R."/>
            <person name="Will R."/>
            <person name="Williams K."/>
            <person name="Yoo H."/>
            <person name="Bruce D."/>
            <person name="Detter C."/>
            <person name="Munk C."/>
            <person name="Brettin T.S."/>
        </authorList>
    </citation>
    <scope>NUCLEOTIDE SEQUENCE [LARGE SCALE GENOMIC DNA]</scope>
    <source>
        <strain>ATCC 23445 / NCTC 10510</strain>
    </source>
</reference>
<gene>
    <name evidence="1" type="primary">truA</name>
    <name type="ordered locus">BSUIS_B1028</name>
</gene>